<name>TAF7L_HUMAN</name>
<gene>
    <name type="primary">TAF7L</name>
    <name type="synonym">TAF2Q</name>
</gene>
<dbReference type="EMBL" id="AF285595">
    <property type="protein sequence ID" value="AAK31974.1"/>
    <property type="molecule type" value="mRNA"/>
</dbReference>
<dbReference type="EMBL" id="AK026810">
    <property type="protein sequence ID" value="BAB15560.1"/>
    <property type="molecule type" value="mRNA"/>
</dbReference>
<dbReference type="EMBL" id="Z68331">
    <property type="status" value="NOT_ANNOTATED_CDS"/>
    <property type="molecule type" value="Genomic_DNA"/>
</dbReference>
<dbReference type="EMBL" id="AL109801">
    <property type="status" value="NOT_ANNOTATED_CDS"/>
    <property type="molecule type" value="Genomic_DNA"/>
</dbReference>
<dbReference type="EMBL" id="CH471115">
    <property type="protein sequence ID" value="EAX02847.1"/>
    <property type="molecule type" value="Genomic_DNA"/>
</dbReference>
<dbReference type="EMBL" id="CH471115">
    <property type="protein sequence ID" value="EAX02848.1"/>
    <property type="molecule type" value="Genomic_DNA"/>
</dbReference>
<dbReference type="EMBL" id="BC043391">
    <property type="protein sequence ID" value="AAH43391.1"/>
    <property type="molecule type" value="mRNA"/>
</dbReference>
<dbReference type="CCDS" id="CCDS35347.1">
    <molecule id="Q5H9L4-1"/>
</dbReference>
<dbReference type="CCDS" id="CCDS55466.1">
    <molecule id="Q5H9L4-2"/>
</dbReference>
<dbReference type="CCDS" id="CCDS94640.1">
    <molecule id="Q5H9L4-3"/>
</dbReference>
<dbReference type="RefSeq" id="NP_001161946.1">
    <molecule id="Q5H9L4-2"/>
    <property type="nucleotide sequence ID" value="NM_001168474.2"/>
</dbReference>
<dbReference type="RefSeq" id="NP_001397649.1">
    <molecule id="Q5H9L4-3"/>
    <property type="nucleotide sequence ID" value="NM_001410720.1"/>
</dbReference>
<dbReference type="RefSeq" id="NP_079161.3">
    <molecule id="Q5H9L4-1"/>
    <property type="nucleotide sequence ID" value="NM_024885.4"/>
</dbReference>
<dbReference type="SMR" id="Q5H9L4"/>
<dbReference type="BioGRID" id="119964">
    <property type="interactions" value="24"/>
</dbReference>
<dbReference type="FunCoup" id="Q5H9L4">
    <property type="interactions" value="53"/>
</dbReference>
<dbReference type="IntAct" id="Q5H9L4">
    <property type="interactions" value="25"/>
</dbReference>
<dbReference type="MINT" id="Q5H9L4"/>
<dbReference type="STRING" id="9606.ENSP00000361998"/>
<dbReference type="iPTMnet" id="Q5H9L4"/>
<dbReference type="PhosphoSitePlus" id="Q5H9L4"/>
<dbReference type="BioMuta" id="TAF7L"/>
<dbReference type="DMDM" id="74762183"/>
<dbReference type="MassIVE" id="Q5H9L4"/>
<dbReference type="PaxDb" id="9606-ENSP00000361998"/>
<dbReference type="PeptideAtlas" id="Q5H9L4"/>
<dbReference type="ProteomicsDB" id="62896">
    <molecule id="Q5H9L4-1"/>
</dbReference>
<dbReference type="ProteomicsDB" id="62897">
    <molecule id="Q5H9L4-2"/>
</dbReference>
<dbReference type="ProteomicsDB" id="62898">
    <molecule id="Q5H9L4-3"/>
</dbReference>
<dbReference type="Pumba" id="Q5H9L4"/>
<dbReference type="Antibodypedia" id="451">
    <property type="antibodies" value="116 antibodies from 27 providers"/>
</dbReference>
<dbReference type="DNASU" id="54457"/>
<dbReference type="Ensembl" id="ENST00000324762.10">
    <molecule id="Q5H9L4-3"/>
    <property type="protein sequence ID" value="ENSP00000320283.6"/>
    <property type="gene ID" value="ENSG00000102387.16"/>
</dbReference>
<dbReference type="Ensembl" id="ENST00000356784.2">
    <molecule id="Q5H9L4-2"/>
    <property type="protein sequence ID" value="ENSP00000349235.1"/>
    <property type="gene ID" value="ENSG00000102387.16"/>
</dbReference>
<dbReference type="Ensembl" id="ENST00000372907.7">
    <molecule id="Q5H9L4-1"/>
    <property type="protein sequence ID" value="ENSP00000361998.3"/>
    <property type="gene ID" value="ENSG00000102387.16"/>
</dbReference>
<dbReference type="GeneID" id="54457"/>
<dbReference type="KEGG" id="hsa:54457"/>
<dbReference type="MANE-Select" id="ENST00000356784.2">
    <molecule id="Q5H9L4-2"/>
    <property type="protein sequence ID" value="ENSP00000349235.1"/>
    <property type="RefSeq nucleotide sequence ID" value="NM_001168474.2"/>
    <property type="RefSeq protein sequence ID" value="NP_001161946.1"/>
</dbReference>
<dbReference type="UCSC" id="uc004eha.4">
    <molecule id="Q5H9L4-1"/>
    <property type="organism name" value="human"/>
</dbReference>
<dbReference type="AGR" id="HGNC:11548"/>
<dbReference type="CTD" id="54457"/>
<dbReference type="DisGeNET" id="54457"/>
<dbReference type="GeneCards" id="TAF7L"/>
<dbReference type="HGNC" id="HGNC:11548">
    <property type="gene designation" value="TAF7L"/>
</dbReference>
<dbReference type="HPA" id="ENSG00000102387">
    <property type="expression patterns" value="Tissue enriched (testis)"/>
</dbReference>
<dbReference type="MIM" id="300314">
    <property type="type" value="gene"/>
</dbReference>
<dbReference type="neXtProt" id="NX_Q5H9L4"/>
<dbReference type="OpenTargets" id="ENSG00000102387"/>
<dbReference type="PharmGKB" id="PA36323"/>
<dbReference type="VEuPathDB" id="HostDB:ENSG00000102387"/>
<dbReference type="eggNOG" id="KOG4011">
    <property type="taxonomic scope" value="Eukaryota"/>
</dbReference>
<dbReference type="GeneTree" id="ENSGT00940000161565"/>
<dbReference type="HOGENOM" id="CLU_037860_0_1_1"/>
<dbReference type="InParanoid" id="Q5H9L4"/>
<dbReference type="OMA" id="VSETNCE"/>
<dbReference type="OrthoDB" id="153872at2759"/>
<dbReference type="PAN-GO" id="Q5H9L4">
    <property type="GO annotations" value="3 GO annotations based on evolutionary models"/>
</dbReference>
<dbReference type="PhylomeDB" id="Q5H9L4"/>
<dbReference type="TreeFam" id="TF313044"/>
<dbReference type="PathwayCommons" id="Q5H9L4"/>
<dbReference type="Reactome" id="R-HSA-167161">
    <property type="pathway name" value="HIV Transcription Initiation"/>
</dbReference>
<dbReference type="Reactome" id="R-HSA-167162">
    <property type="pathway name" value="RNA Polymerase II HIV Promoter Escape"/>
</dbReference>
<dbReference type="Reactome" id="R-HSA-167172">
    <property type="pathway name" value="Transcription of the HIV genome"/>
</dbReference>
<dbReference type="Reactome" id="R-HSA-674695">
    <property type="pathway name" value="RNA Polymerase II Pre-transcription Events"/>
</dbReference>
<dbReference type="Reactome" id="R-HSA-6804756">
    <property type="pathway name" value="Regulation of TP53 Activity through Phosphorylation"/>
</dbReference>
<dbReference type="Reactome" id="R-HSA-73776">
    <property type="pathway name" value="RNA Polymerase II Promoter Escape"/>
</dbReference>
<dbReference type="Reactome" id="R-HSA-73779">
    <property type="pathway name" value="RNA Polymerase II Transcription Pre-Initiation And Promoter Opening"/>
</dbReference>
<dbReference type="Reactome" id="R-HSA-75953">
    <property type="pathway name" value="RNA Polymerase II Transcription Initiation"/>
</dbReference>
<dbReference type="Reactome" id="R-HSA-76042">
    <property type="pathway name" value="RNA Polymerase II Transcription Initiation And Promoter Clearance"/>
</dbReference>
<dbReference type="SignaLink" id="Q5H9L4"/>
<dbReference type="BioGRID-ORCS" id="54457">
    <property type="hits" value="19 hits in 776 CRISPR screens"/>
</dbReference>
<dbReference type="ChiTaRS" id="TAF7L">
    <property type="organism name" value="human"/>
</dbReference>
<dbReference type="GenomeRNAi" id="54457"/>
<dbReference type="Pharos" id="Q5H9L4">
    <property type="development level" value="Tbio"/>
</dbReference>
<dbReference type="PRO" id="PR:Q5H9L4"/>
<dbReference type="Proteomes" id="UP000005640">
    <property type="component" value="Chromosome X"/>
</dbReference>
<dbReference type="RNAct" id="Q5H9L4">
    <property type="molecule type" value="protein"/>
</dbReference>
<dbReference type="Bgee" id="ENSG00000102387">
    <property type="expression patterns" value="Expressed in right testis and 105 other cell types or tissues"/>
</dbReference>
<dbReference type="ExpressionAtlas" id="Q5H9L4">
    <property type="expression patterns" value="baseline and differential"/>
</dbReference>
<dbReference type="GO" id="GO:0005737">
    <property type="term" value="C:cytoplasm"/>
    <property type="evidence" value="ECO:0007669"/>
    <property type="project" value="UniProtKB-SubCell"/>
</dbReference>
<dbReference type="GO" id="GO:0005669">
    <property type="term" value="C:transcription factor TFIID complex"/>
    <property type="evidence" value="ECO:0000318"/>
    <property type="project" value="GO_Central"/>
</dbReference>
<dbReference type="GO" id="GO:0030154">
    <property type="term" value="P:cell differentiation"/>
    <property type="evidence" value="ECO:0007669"/>
    <property type="project" value="UniProtKB-KW"/>
</dbReference>
<dbReference type="GO" id="GO:0051123">
    <property type="term" value="P:RNA polymerase II preinitiation complex assembly"/>
    <property type="evidence" value="ECO:0000318"/>
    <property type="project" value="GO_Central"/>
</dbReference>
<dbReference type="GO" id="GO:0007283">
    <property type="term" value="P:spermatogenesis"/>
    <property type="evidence" value="ECO:0007669"/>
    <property type="project" value="UniProtKB-KW"/>
</dbReference>
<dbReference type="CDD" id="cd08047">
    <property type="entry name" value="TAF7"/>
    <property type="match status" value="1"/>
</dbReference>
<dbReference type="InterPro" id="IPR037817">
    <property type="entry name" value="TAF7"/>
</dbReference>
<dbReference type="InterPro" id="IPR006751">
    <property type="entry name" value="TAFII55_prot_cons_reg"/>
</dbReference>
<dbReference type="PANTHER" id="PTHR12228">
    <property type="entry name" value="TRANSCRIPTION INITIATION FACTOR TFIID 55 KD SUBUNIT-RELATED"/>
    <property type="match status" value="1"/>
</dbReference>
<dbReference type="PANTHER" id="PTHR12228:SF8">
    <property type="entry name" value="TRANSCRIPTION INITIATION FACTOR TFIID SUBUNIT 7-LIKE"/>
    <property type="match status" value="1"/>
</dbReference>
<dbReference type="Pfam" id="PF04658">
    <property type="entry name" value="TAFII55_N"/>
    <property type="match status" value="1"/>
</dbReference>
<dbReference type="SMART" id="SM01370">
    <property type="entry name" value="TAFII55_N"/>
    <property type="match status" value="1"/>
</dbReference>
<feature type="chain" id="PRO_0000307861" description="Transcription initiation factor TFIID subunit 7-like">
    <location>
        <begin position="1"/>
        <end position="462"/>
    </location>
</feature>
<feature type="region of interest" description="Disordered" evidence="3">
    <location>
        <begin position="1"/>
        <end position="97"/>
    </location>
</feature>
<feature type="region of interest" description="Disordered" evidence="3">
    <location>
        <begin position="327"/>
        <end position="366"/>
    </location>
</feature>
<feature type="coiled-coil region" evidence="2">
    <location>
        <begin position="342"/>
        <end position="462"/>
    </location>
</feature>
<feature type="compositionally biased region" description="Low complexity" evidence="3">
    <location>
        <begin position="16"/>
        <end position="30"/>
    </location>
</feature>
<feature type="compositionally biased region" description="Low complexity" evidence="3">
    <location>
        <begin position="66"/>
        <end position="77"/>
    </location>
</feature>
<feature type="compositionally biased region" description="Acidic residues" evidence="3">
    <location>
        <begin position="333"/>
        <end position="365"/>
    </location>
</feature>
<feature type="splice variant" id="VSP_028847" description="In isoform 2 and isoform 3." evidence="9 10">
    <location>
        <begin position="1"/>
        <end position="86"/>
    </location>
</feature>
<feature type="splice variant" id="VSP_028848" description="In isoform 3." evidence="10">
    <location>
        <begin position="317"/>
        <end position="390"/>
    </location>
</feature>
<feature type="sequence variant" id="VAR_036695" description="In dbSNP:rs5951328." evidence="5">
    <original>L</original>
    <variation>P</variation>
    <location>
        <position position="34"/>
    </location>
</feature>
<feature type="sequence variant" id="VAR_036696" description="In dbSNP:rs147493489." evidence="6">
    <original>E</original>
    <variation>K</variation>
    <location>
        <position position="61"/>
    </location>
</feature>
<feature type="sequence variant" id="VAR_086590" description="Found in an oligozoospermic man; uncertain significance; dbSNP:rs138089236." evidence="8">
    <original>D</original>
    <variation>G</variation>
    <location>
        <position position="136"/>
    </location>
</feature>
<feature type="sequence variant" id="VAR_036697" description="In dbSNP:rs35899692." evidence="6 7">
    <original>S</original>
    <variation>G</variation>
    <location>
        <position position="308"/>
    </location>
</feature>
<feature type="sequence variant" id="VAR_036698" evidence="4 6 7">
    <location>
        <begin position="350"/>
        <end position="351"/>
    </location>
</feature>
<feature type="sequence variant" id="VAR_036699" description="In dbSNP:rs41310729." evidence="6 7">
    <original>R</original>
    <variation>H</variation>
    <location>
        <position position="458"/>
    </location>
</feature>
<reference key="1">
    <citation type="journal article" date="2001" name="Nat. Genet.">
        <title>An abundance of X-linked genes expressed in spermatogonia.</title>
        <authorList>
            <person name="Wang P.J."/>
            <person name="McCarrey J.R."/>
            <person name="Yang F."/>
            <person name="Page D.C."/>
        </authorList>
    </citation>
    <scope>NUCLEOTIDE SEQUENCE [MRNA] (ISOFORM 2)</scope>
    <scope>TISSUE SPECIFICITY</scope>
    <scope>VARIANT 350-ASP-GLU-351 DEL</scope>
    <source>
        <tissue>Testis</tissue>
    </source>
</reference>
<reference key="2">
    <citation type="journal article" date="2004" name="Nat. Genet.">
        <title>Complete sequencing and characterization of 21,243 full-length human cDNAs.</title>
        <authorList>
            <person name="Ota T."/>
            <person name="Suzuki Y."/>
            <person name="Nishikawa T."/>
            <person name="Otsuki T."/>
            <person name="Sugiyama T."/>
            <person name="Irie R."/>
            <person name="Wakamatsu A."/>
            <person name="Hayashi K."/>
            <person name="Sato H."/>
            <person name="Nagai K."/>
            <person name="Kimura K."/>
            <person name="Makita H."/>
            <person name="Sekine M."/>
            <person name="Obayashi M."/>
            <person name="Nishi T."/>
            <person name="Shibahara T."/>
            <person name="Tanaka T."/>
            <person name="Ishii S."/>
            <person name="Yamamoto J."/>
            <person name="Saito K."/>
            <person name="Kawai Y."/>
            <person name="Isono Y."/>
            <person name="Nakamura Y."/>
            <person name="Nagahari K."/>
            <person name="Murakami K."/>
            <person name="Yasuda T."/>
            <person name="Iwayanagi T."/>
            <person name="Wagatsuma M."/>
            <person name="Shiratori A."/>
            <person name="Sudo H."/>
            <person name="Hosoiri T."/>
            <person name="Kaku Y."/>
            <person name="Kodaira H."/>
            <person name="Kondo H."/>
            <person name="Sugawara M."/>
            <person name="Takahashi M."/>
            <person name="Kanda K."/>
            <person name="Yokoi T."/>
            <person name="Furuya T."/>
            <person name="Kikkawa E."/>
            <person name="Omura Y."/>
            <person name="Abe K."/>
            <person name="Kamihara K."/>
            <person name="Katsuta N."/>
            <person name="Sato K."/>
            <person name="Tanikawa M."/>
            <person name="Yamazaki M."/>
            <person name="Ninomiya K."/>
            <person name="Ishibashi T."/>
            <person name="Yamashita H."/>
            <person name="Murakawa K."/>
            <person name="Fujimori K."/>
            <person name="Tanai H."/>
            <person name="Kimata M."/>
            <person name="Watanabe M."/>
            <person name="Hiraoka S."/>
            <person name="Chiba Y."/>
            <person name="Ishida S."/>
            <person name="Ono Y."/>
            <person name="Takiguchi S."/>
            <person name="Watanabe S."/>
            <person name="Yosida M."/>
            <person name="Hotuta T."/>
            <person name="Kusano J."/>
            <person name="Kanehori K."/>
            <person name="Takahashi-Fujii A."/>
            <person name="Hara H."/>
            <person name="Tanase T.-O."/>
            <person name="Nomura Y."/>
            <person name="Togiya S."/>
            <person name="Komai F."/>
            <person name="Hara R."/>
            <person name="Takeuchi K."/>
            <person name="Arita M."/>
            <person name="Imose N."/>
            <person name="Musashino K."/>
            <person name="Yuuki H."/>
            <person name="Oshima A."/>
            <person name="Sasaki N."/>
            <person name="Aotsuka S."/>
            <person name="Yoshikawa Y."/>
            <person name="Matsunawa H."/>
            <person name="Ichihara T."/>
            <person name="Shiohata N."/>
            <person name="Sano S."/>
            <person name="Moriya S."/>
            <person name="Momiyama H."/>
            <person name="Satoh N."/>
            <person name="Takami S."/>
            <person name="Terashima Y."/>
            <person name="Suzuki O."/>
            <person name="Nakagawa S."/>
            <person name="Senoh A."/>
            <person name="Mizoguchi H."/>
            <person name="Goto Y."/>
            <person name="Shimizu F."/>
            <person name="Wakebe H."/>
            <person name="Hishigaki H."/>
            <person name="Watanabe T."/>
            <person name="Sugiyama A."/>
            <person name="Takemoto M."/>
            <person name="Kawakami B."/>
            <person name="Yamazaki M."/>
            <person name="Watanabe K."/>
            <person name="Kumagai A."/>
            <person name="Itakura S."/>
            <person name="Fukuzumi Y."/>
            <person name="Fujimori Y."/>
            <person name="Komiyama M."/>
            <person name="Tashiro H."/>
            <person name="Tanigami A."/>
            <person name="Fujiwara T."/>
            <person name="Ono T."/>
            <person name="Yamada K."/>
            <person name="Fujii Y."/>
            <person name="Ozaki K."/>
            <person name="Hirao M."/>
            <person name="Ohmori Y."/>
            <person name="Kawabata A."/>
            <person name="Hikiji T."/>
            <person name="Kobatake N."/>
            <person name="Inagaki H."/>
            <person name="Ikema Y."/>
            <person name="Okamoto S."/>
            <person name="Okitani R."/>
            <person name="Kawakami T."/>
            <person name="Noguchi S."/>
            <person name="Itoh T."/>
            <person name="Shigeta K."/>
            <person name="Senba T."/>
            <person name="Matsumura K."/>
            <person name="Nakajima Y."/>
            <person name="Mizuno T."/>
            <person name="Morinaga M."/>
            <person name="Sasaki M."/>
            <person name="Togashi T."/>
            <person name="Oyama M."/>
            <person name="Hata H."/>
            <person name="Watanabe M."/>
            <person name="Komatsu T."/>
            <person name="Mizushima-Sugano J."/>
            <person name="Satoh T."/>
            <person name="Shirai Y."/>
            <person name="Takahashi Y."/>
            <person name="Nakagawa K."/>
            <person name="Okumura K."/>
            <person name="Nagase T."/>
            <person name="Nomura N."/>
            <person name="Kikuchi H."/>
            <person name="Masuho Y."/>
            <person name="Yamashita R."/>
            <person name="Nakai K."/>
            <person name="Yada T."/>
            <person name="Nakamura Y."/>
            <person name="Ohara O."/>
            <person name="Isogai T."/>
            <person name="Sugano S."/>
        </authorList>
    </citation>
    <scope>NUCLEOTIDE SEQUENCE [LARGE SCALE MRNA] (ISOFORM 3)</scope>
    <source>
        <tissue>Lung</tissue>
    </source>
</reference>
<reference key="3">
    <citation type="journal article" date="2005" name="Nature">
        <title>The DNA sequence of the human X chromosome.</title>
        <authorList>
            <person name="Ross M.T."/>
            <person name="Grafham D.V."/>
            <person name="Coffey A.J."/>
            <person name="Scherer S."/>
            <person name="McLay K."/>
            <person name="Muzny D."/>
            <person name="Platzer M."/>
            <person name="Howell G.R."/>
            <person name="Burrows C."/>
            <person name="Bird C.P."/>
            <person name="Frankish A."/>
            <person name="Lovell F.L."/>
            <person name="Howe K.L."/>
            <person name="Ashurst J.L."/>
            <person name="Fulton R.S."/>
            <person name="Sudbrak R."/>
            <person name="Wen G."/>
            <person name="Jones M.C."/>
            <person name="Hurles M.E."/>
            <person name="Andrews T.D."/>
            <person name="Scott C.E."/>
            <person name="Searle S."/>
            <person name="Ramser J."/>
            <person name="Whittaker A."/>
            <person name="Deadman R."/>
            <person name="Carter N.P."/>
            <person name="Hunt S.E."/>
            <person name="Chen R."/>
            <person name="Cree A."/>
            <person name="Gunaratne P."/>
            <person name="Havlak P."/>
            <person name="Hodgson A."/>
            <person name="Metzker M.L."/>
            <person name="Richards S."/>
            <person name="Scott G."/>
            <person name="Steffen D."/>
            <person name="Sodergren E."/>
            <person name="Wheeler D.A."/>
            <person name="Worley K.C."/>
            <person name="Ainscough R."/>
            <person name="Ambrose K.D."/>
            <person name="Ansari-Lari M.A."/>
            <person name="Aradhya S."/>
            <person name="Ashwell R.I."/>
            <person name="Babbage A.K."/>
            <person name="Bagguley C.L."/>
            <person name="Ballabio A."/>
            <person name="Banerjee R."/>
            <person name="Barker G.E."/>
            <person name="Barlow K.F."/>
            <person name="Barrett I.P."/>
            <person name="Bates K.N."/>
            <person name="Beare D.M."/>
            <person name="Beasley H."/>
            <person name="Beasley O."/>
            <person name="Beck A."/>
            <person name="Bethel G."/>
            <person name="Blechschmidt K."/>
            <person name="Brady N."/>
            <person name="Bray-Allen S."/>
            <person name="Bridgeman A.M."/>
            <person name="Brown A.J."/>
            <person name="Brown M.J."/>
            <person name="Bonnin D."/>
            <person name="Bruford E.A."/>
            <person name="Buhay C."/>
            <person name="Burch P."/>
            <person name="Burford D."/>
            <person name="Burgess J."/>
            <person name="Burrill W."/>
            <person name="Burton J."/>
            <person name="Bye J.M."/>
            <person name="Carder C."/>
            <person name="Carrel L."/>
            <person name="Chako J."/>
            <person name="Chapman J.C."/>
            <person name="Chavez D."/>
            <person name="Chen E."/>
            <person name="Chen G."/>
            <person name="Chen Y."/>
            <person name="Chen Z."/>
            <person name="Chinault C."/>
            <person name="Ciccodicola A."/>
            <person name="Clark S.Y."/>
            <person name="Clarke G."/>
            <person name="Clee C.M."/>
            <person name="Clegg S."/>
            <person name="Clerc-Blankenburg K."/>
            <person name="Clifford K."/>
            <person name="Cobley V."/>
            <person name="Cole C.G."/>
            <person name="Conquer J.S."/>
            <person name="Corby N."/>
            <person name="Connor R.E."/>
            <person name="David R."/>
            <person name="Davies J."/>
            <person name="Davis C."/>
            <person name="Davis J."/>
            <person name="Delgado O."/>
            <person name="Deshazo D."/>
            <person name="Dhami P."/>
            <person name="Ding Y."/>
            <person name="Dinh H."/>
            <person name="Dodsworth S."/>
            <person name="Draper H."/>
            <person name="Dugan-Rocha S."/>
            <person name="Dunham A."/>
            <person name="Dunn M."/>
            <person name="Durbin K.J."/>
            <person name="Dutta I."/>
            <person name="Eades T."/>
            <person name="Ellwood M."/>
            <person name="Emery-Cohen A."/>
            <person name="Errington H."/>
            <person name="Evans K.L."/>
            <person name="Faulkner L."/>
            <person name="Francis F."/>
            <person name="Frankland J."/>
            <person name="Fraser A.E."/>
            <person name="Galgoczy P."/>
            <person name="Gilbert J."/>
            <person name="Gill R."/>
            <person name="Gloeckner G."/>
            <person name="Gregory S.G."/>
            <person name="Gribble S."/>
            <person name="Griffiths C."/>
            <person name="Grocock R."/>
            <person name="Gu Y."/>
            <person name="Gwilliam R."/>
            <person name="Hamilton C."/>
            <person name="Hart E.A."/>
            <person name="Hawes A."/>
            <person name="Heath P.D."/>
            <person name="Heitmann K."/>
            <person name="Hennig S."/>
            <person name="Hernandez J."/>
            <person name="Hinzmann B."/>
            <person name="Ho S."/>
            <person name="Hoffs M."/>
            <person name="Howden P.J."/>
            <person name="Huckle E.J."/>
            <person name="Hume J."/>
            <person name="Hunt P.J."/>
            <person name="Hunt A.R."/>
            <person name="Isherwood J."/>
            <person name="Jacob L."/>
            <person name="Johnson D."/>
            <person name="Jones S."/>
            <person name="de Jong P.J."/>
            <person name="Joseph S.S."/>
            <person name="Keenan S."/>
            <person name="Kelly S."/>
            <person name="Kershaw J.K."/>
            <person name="Khan Z."/>
            <person name="Kioschis P."/>
            <person name="Klages S."/>
            <person name="Knights A.J."/>
            <person name="Kosiura A."/>
            <person name="Kovar-Smith C."/>
            <person name="Laird G.K."/>
            <person name="Langford C."/>
            <person name="Lawlor S."/>
            <person name="Leversha M."/>
            <person name="Lewis L."/>
            <person name="Liu W."/>
            <person name="Lloyd C."/>
            <person name="Lloyd D.M."/>
            <person name="Loulseged H."/>
            <person name="Loveland J.E."/>
            <person name="Lovell J.D."/>
            <person name="Lozado R."/>
            <person name="Lu J."/>
            <person name="Lyne R."/>
            <person name="Ma J."/>
            <person name="Maheshwari M."/>
            <person name="Matthews L.H."/>
            <person name="McDowall J."/>
            <person name="McLaren S."/>
            <person name="McMurray A."/>
            <person name="Meidl P."/>
            <person name="Meitinger T."/>
            <person name="Milne S."/>
            <person name="Miner G."/>
            <person name="Mistry S.L."/>
            <person name="Morgan M."/>
            <person name="Morris S."/>
            <person name="Mueller I."/>
            <person name="Mullikin J.C."/>
            <person name="Nguyen N."/>
            <person name="Nordsiek G."/>
            <person name="Nyakatura G."/>
            <person name="O'dell C.N."/>
            <person name="Okwuonu G."/>
            <person name="Palmer S."/>
            <person name="Pandian R."/>
            <person name="Parker D."/>
            <person name="Parrish J."/>
            <person name="Pasternak S."/>
            <person name="Patel D."/>
            <person name="Pearce A.V."/>
            <person name="Pearson D.M."/>
            <person name="Pelan S.E."/>
            <person name="Perez L."/>
            <person name="Porter K.M."/>
            <person name="Ramsey Y."/>
            <person name="Reichwald K."/>
            <person name="Rhodes S."/>
            <person name="Ridler K.A."/>
            <person name="Schlessinger D."/>
            <person name="Schueler M.G."/>
            <person name="Sehra H.K."/>
            <person name="Shaw-Smith C."/>
            <person name="Shen H."/>
            <person name="Sheridan E.M."/>
            <person name="Shownkeen R."/>
            <person name="Skuce C.D."/>
            <person name="Smith M.L."/>
            <person name="Sotheran E.C."/>
            <person name="Steingruber H.E."/>
            <person name="Steward C.A."/>
            <person name="Storey R."/>
            <person name="Swann R.M."/>
            <person name="Swarbreck D."/>
            <person name="Tabor P.E."/>
            <person name="Taudien S."/>
            <person name="Taylor T."/>
            <person name="Teague B."/>
            <person name="Thomas K."/>
            <person name="Thorpe A."/>
            <person name="Timms K."/>
            <person name="Tracey A."/>
            <person name="Trevanion S."/>
            <person name="Tromans A.C."/>
            <person name="d'Urso M."/>
            <person name="Verduzco D."/>
            <person name="Villasana D."/>
            <person name="Waldron L."/>
            <person name="Wall M."/>
            <person name="Wang Q."/>
            <person name="Warren J."/>
            <person name="Warry G.L."/>
            <person name="Wei X."/>
            <person name="West A."/>
            <person name="Whitehead S.L."/>
            <person name="Whiteley M.N."/>
            <person name="Wilkinson J.E."/>
            <person name="Willey D.L."/>
            <person name="Williams G."/>
            <person name="Williams L."/>
            <person name="Williamson A."/>
            <person name="Williamson H."/>
            <person name="Wilming L."/>
            <person name="Woodmansey R.L."/>
            <person name="Wray P.W."/>
            <person name="Yen J."/>
            <person name="Zhang J."/>
            <person name="Zhou J."/>
            <person name="Zoghbi H."/>
            <person name="Zorilla S."/>
            <person name="Buck D."/>
            <person name="Reinhardt R."/>
            <person name="Poustka A."/>
            <person name="Rosenthal A."/>
            <person name="Lehrach H."/>
            <person name="Meindl A."/>
            <person name="Minx P.J."/>
            <person name="Hillier L.W."/>
            <person name="Willard H.F."/>
            <person name="Wilson R.K."/>
            <person name="Waterston R.H."/>
            <person name="Rice C.M."/>
            <person name="Vaudin M."/>
            <person name="Coulson A."/>
            <person name="Nelson D.L."/>
            <person name="Weinstock G."/>
            <person name="Sulston J.E."/>
            <person name="Durbin R.M."/>
            <person name="Hubbard T."/>
            <person name="Gibbs R.A."/>
            <person name="Beck S."/>
            <person name="Rogers J."/>
            <person name="Bentley D.R."/>
        </authorList>
    </citation>
    <scope>NUCLEOTIDE SEQUENCE [LARGE SCALE GENOMIC DNA]</scope>
</reference>
<reference key="4">
    <citation type="submission" date="2005-07" db="EMBL/GenBank/DDBJ databases">
        <authorList>
            <person name="Mural R.J."/>
            <person name="Istrail S."/>
            <person name="Sutton G.G."/>
            <person name="Florea L."/>
            <person name="Halpern A.L."/>
            <person name="Mobarry C.M."/>
            <person name="Lippert R."/>
            <person name="Walenz B."/>
            <person name="Shatkay H."/>
            <person name="Dew I."/>
            <person name="Miller J.R."/>
            <person name="Flanigan M.J."/>
            <person name="Edwards N.J."/>
            <person name="Bolanos R."/>
            <person name="Fasulo D."/>
            <person name="Halldorsson B.V."/>
            <person name="Hannenhalli S."/>
            <person name="Turner R."/>
            <person name="Yooseph S."/>
            <person name="Lu F."/>
            <person name="Nusskern D.R."/>
            <person name="Shue B.C."/>
            <person name="Zheng X.H."/>
            <person name="Zhong F."/>
            <person name="Delcher A.L."/>
            <person name="Huson D.H."/>
            <person name="Kravitz S.A."/>
            <person name="Mouchard L."/>
            <person name="Reinert K."/>
            <person name="Remington K.A."/>
            <person name="Clark A.G."/>
            <person name="Waterman M.S."/>
            <person name="Eichler E.E."/>
            <person name="Adams M.D."/>
            <person name="Hunkapiller M.W."/>
            <person name="Myers E.W."/>
            <person name="Venter J.C."/>
        </authorList>
    </citation>
    <scope>NUCLEOTIDE SEQUENCE [LARGE SCALE GENOMIC DNA]</scope>
</reference>
<reference key="5">
    <citation type="journal article" date="2004" name="Genome Res.">
        <title>The status, quality, and expansion of the NIH full-length cDNA project: the Mammalian Gene Collection (MGC).</title>
        <authorList>
            <consortium name="The MGC Project Team"/>
        </authorList>
    </citation>
    <scope>NUCLEOTIDE SEQUENCE [LARGE SCALE MRNA] (ISOFORM 1)</scope>
    <scope>VARIANT PRO-34</scope>
    <source>
        <tissue>Eye</tissue>
    </source>
</reference>
<reference key="6">
    <citation type="journal article" date="2006" name="Mol. Hum. Reprod.">
        <title>The role of the testis-specific gene hTAF7L in the aetiology of male infertility.</title>
        <authorList>
            <person name="Stouffs K."/>
            <person name="Willems A."/>
            <person name="Lissens W."/>
            <person name="Tournaye H."/>
            <person name="Van Steirteghem A."/>
            <person name="Liebaers I."/>
        </authorList>
    </citation>
    <scope>VARIANTS LYS-61; GLY-308; 350-ASP-GLU-351 DEL AND HIS-458</scope>
</reference>
<reference key="7">
    <citation type="journal article" date="2007" name="Andrologia">
        <title>Mutation analysis of the X-chromosome linked, testis-specific TAF7L gene in spermatogenic failure.</title>
        <authorList>
            <person name="Akinloye O."/>
            <person name="Gromoll J."/>
            <person name="Callies C."/>
            <person name="Nieschlag E."/>
            <person name="Simoni M."/>
        </authorList>
    </citation>
    <scope>VARIANTS GLY-308; 350-ASP-GLU-351 DEL AND HIS-458</scope>
</reference>
<reference key="8">
    <citation type="journal article" date="2022" name="Biol. Reprod.">
        <title>Genetic characterization of a missense mutation in the X-linked TAF7L gene identified in an oligozoospermic man.</title>
        <authorList>
            <person name="Ling L."/>
            <person name="Li F."/>
            <person name="Yang P."/>
            <person name="Oates R.D."/>
            <person name="Silber S."/>
            <person name="Kurischko C."/>
            <person name="Luca F.C."/>
            <person name="Leu N.A."/>
            <person name="Zhang J."/>
            <person name="Yue Q."/>
            <person name="Skaletsky H."/>
            <person name="Brown L.G."/>
            <person name="Rozen S."/>
            <person name="Page D.C."/>
            <person name="Wang P.J."/>
            <person name="Zheng K."/>
        </authorList>
    </citation>
    <scope>VARIANT GLY-136</scope>
</reference>
<comment type="function">
    <text evidence="1">Probably functions as a spermatogenesis-specific component of the DNA-binding general transcription factor complex TFIID, a multimeric protein complex that plays a central role in mediating promoter responses to various activators and repressors. May play a role in spermatogenesis (By similarity).</text>
</comment>
<comment type="subunit">
    <text evidence="1">TFIID is composed of TATA binding protein (TBP) and a number of TBP-associated factors (TAFs). TAF7L may replace TAF7 in a spermatogenesis-specific form of TFIID. Interacts with TBP; the interaction occurs in a sub-population of cells (pachytene and haploid round spermatids) and is developmentally regulated through differential intracellular localization of the two proteins. Interacts with TAF1 (By similarity).</text>
</comment>
<comment type="interaction">
    <interactant intactId="EBI-6658013">
        <id>Q5H9L4</id>
    </interactant>
    <interactant intactId="EBI-747693">
        <id>P41227</id>
        <label>NAA10</label>
    </interactant>
    <organismsDiffer>false</organismsDiffer>
    <experiments>3</experiments>
</comment>
<comment type="subcellular location">
    <subcellularLocation>
        <location evidence="1">Nucleus</location>
    </subcellularLocation>
    <subcellularLocation>
        <location evidence="1">Cytoplasm</location>
    </subcellularLocation>
    <text evidence="1">Cytoplasmic in spermatogonia and early spermatocytes (preleptotene, leptotene, and zygotene); translocates into the nuclei of pachytene spermatocytes and round spermatids.</text>
</comment>
<comment type="alternative products">
    <event type="alternative splicing"/>
    <isoform>
        <id>Q5H9L4-1</id>
        <name>1</name>
        <sequence type="displayed"/>
    </isoform>
    <isoform>
        <id>Q5H9L4-2</id>
        <name>2</name>
        <sequence type="described" ref="VSP_028847"/>
    </isoform>
    <isoform>
        <id>Q5H9L4-3</id>
        <name>3</name>
        <sequence type="described" ref="VSP_028847 VSP_028848"/>
    </isoform>
</comment>
<comment type="tissue specificity">
    <text evidence="4">Testis-specific.</text>
</comment>
<comment type="similarity">
    <text evidence="11">Belongs to the TAF7 family.</text>
</comment>
<keyword id="KW-0025">Alternative splicing</keyword>
<keyword id="KW-0175">Coiled coil</keyword>
<keyword id="KW-0963">Cytoplasm</keyword>
<keyword id="KW-0217">Developmental protein</keyword>
<keyword id="KW-0221">Differentiation</keyword>
<keyword id="KW-0539">Nucleus</keyword>
<keyword id="KW-1267">Proteomics identification</keyword>
<keyword id="KW-1185">Reference proteome</keyword>
<keyword id="KW-0744">Spermatogenesis</keyword>
<keyword id="KW-0804">Transcription</keyword>
<keyword id="KW-0805">Transcription regulation</keyword>
<accession>Q5H9L4</accession>
<accession>Q5H9L6</accession>
<accession>Q86XI4</accession>
<accession>Q9BXU5</accession>
<accession>Q9H5R0</accession>
<protein>
    <recommendedName>
        <fullName>Transcription initiation factor TFIID subunit 7-like</fullName>
    </recommendedName>
    <alternativeName>
        <fullName>Cancer/testis antigen 40</fullName>
        <shortName>CT40</shortName>
    </alternativeName>
    <alternativeName>
        <fullName>RNA polymerase II TBP-associated factor subunit Q</fullName>
    </alternativeName>
    <alternativeName>
        <fullName>TATA box-binding protein-associated factor 50 kDa</fullName>
    </alternativeName>
    <alternativeName>
        <fullName>Transcription initiation factor TFIID 50 kDa subunit</fullName>
    </alternativeName>
</protein>
<proteinExistence type="evidence at protein level"/>
<evidence type="ECO:0000250" key="1"/>
<evidence type="ECO:0000255" key="2"/>
<evidence type="ECO:0000256" key="3">
    <source>
        <dbReference type="SAM" id="MobiDB-lite"/>
    </source>
</evidence>
<evidence type="ECO:0000269" key="4">
    <source>
    </source>
</evidence>
<evidence type="ECO:0000269" key="5">
    <source>
    </source>
</evidence>
<evidence type="ECO:0000269" key="6">
    <source>
    </source>
</evidence>
<evidence type="ECO:0000269" key="7">
    <source>
    </source>
</evidence>
<evidence type="ECO:0000269" key="8">
    <source>
    </source>
</evidence>
<evidence type="ECO:0000303" key="9">
    <source>
    </source>
</evidence>
<evidence type="ECO:0000303" key="10">
    <source>
    </source>
</evidence>
<evidence type="ECO:0000305" key="11"/>
<sequence>MECPEGQLPISSENDSTPTVSTSEVTSQQEPQILVDRGSETTYESSADIAGDEGTQIPADEDTQTDADSSAQAAAQAPENFQEGKDMSESQDEVPDEVENQFILRLPLEHACTVRNLARSQSVKMKDKLKIDLLPDGRHAVVEVEDVPLAAKLVDLPCVIESLRTLDKKTFYKTADISQMLVCTADGDIHLSPEEPAASTDPNIVRKKERGREEKCVWKHGITPPLKNVRKKRFRKTQKKVPDVKEMEKSSFTEYIESPDVENEVKRLLRSDAEAVSTRWEVIAEDGTKEIESQGSIPGFLISSGMSSHKQGHTSSEYDMLREMFSDSRSNNDDDEDEDDEDEDEDEDEDEDEDKEEEEEDCSEEYLERQLQAEFIESGQYRANEGTSSIVMEIQKQIEKKEKKLHKIQNKAQRQKDLIMKVENLTLKNHFQSVLEQLELQEKQKNEKLISLQEQLQRFLKK</sequence>
<organism>
    <name type="scientific">Homo sapiens</name>
    <name type="common">Human</name>
    <dbReference type="NCBI Taxonomy" id="9606"/>
    <lineage>
        <taxon>Eukaryota</taxon>
        <taxon>Metazoa</taxon>
        <taxon>Chordata</taxon>
        <taxon>Craniata</taxon>
        <taxon>Vertebrata</taxon>
        <taxon>Euteleostomi</taxon>
        <taxon>Mammalia</taxon>
        <taxon>Eutheria</taxon>
        <taxon>Euarchontoglires</taxon>
        <taxon>Primates</taxon>
        <taxon>Haplorrhini</taxon>
        <taxon>Catarrhini</taxon>
        <taxon>Hominidae</taxon>
        <taxon>Homo</taxon>
    </lineage>
</organism>